<proteinExistence type="evidence at protein level"/>
<comment type="function">
    <text evidence="1">May form part of 2 intersubunit bridges in the assembled ribosome. Upon binding to MALSU1, intersubunit bridge formation is blocked, preventing ribosome formation and repressing translation.</text>
</comment>
<comment type="subunit">
    <text evidence="1">Component of the mitochondrial ribosome large subunit (39S) which comprises a 16S rRNA and about 50 distinct proteins. Interacts with MALSU1.</text>
</comment>
<comment type="subcellular location">
    <subcellularLocation>
        <location evidence="2">Mitochondrion</location>
    </subcellularLocation>
</comment>
<comment type="similarity">
    <text evidence="3">Belongs to the universal ribosomal protein uL14 family.</text>
</comment>
<keyword id="KW-0903">Direct protein sequencing</keyword>
<keyword id="KW-0496">Mitochondrion</keyword>
<keyword id="KW-1185">Reference proteome</keyword>
<keyword id="KW-0687">Ribonucleoprotein</keyword>
<keyword id="KW-0689">Ribosomal protein</keyword>
<keyword id="KW-0809">Transit peptide</keyword>
<protein>
    <recommendedName>
        <fullName evidence="3">Large ribosomal subunit protein uL14m</fullName>
    </recommendedName>
    <alternativeName>
        <fullName>39S ribosomal protein L14, mitochondrial</fullName>
        <shortName>L14mt</shortName>
        <shortName>MRP-L14</shortName>
    </alternativeName>
    <alternativeName>
        <fullName>39S ribosomal protein L32, mitochondrial</fullName>
        <shortName>L32mt</shortName>
        <shortName>MRP-L32</shortName>
    </alternativeName>
</protein>
<dbReference type="EMBL" id="AABR03068353">
    <property type="status" value="NOT_ANNOTATED_CDS"/>
    <property type="molecule type" value="Genomic_DNA"/>
</dbReference>
<dbReference type="PIR" id="S78418">
    <property type="entry name" value="S78418"/>
</dbReference>
<dbReference type="RefSeq" id="NP_001100360.1">
    <property type="nucleotide sequence ID" value="NM_001106890.2"/>
</dbReference>
<dbReference type="RefSeq" id="NP_001258060.1">
    <property type="nucleotide sequence ID" value="NM_001271131.1"/>
</dbReference>
<dbReference type="RefSeq" id="XP_006244574.1">
    <property type="nucleotide sequence ID" value="XM_006244512.5"/>
</dbReference>
<dbReference type="RefSeq" id="XP_008765072.1">
    <property type="nucleotide sequence ID" value="XM_008766850.4"/>
</dbReference>
<dbReference type="RefSeq" id="XP_038939109.1">
    <property type="nucleotide sequence ID" value="XM_039083181.2"/>
</dbReference>
<dbReference type="SMR" id="Q7M0E7"/>
<dbReference type="FunCoup" id="Q7M0E7">
    <property type="interactions" value="361"/>
</dbReference>
<dbReference type="STRING" id="10116.ENSRNOP00000026716"/>
<dbReference type="iPTMnet" id="Q7M0E7"/>
<dbReference type="PhosphoSitePlus" id="Q7M0E7"/>
<dbReference type="PaxDb" id="10116-ENSRNOP00000026716"/>
<dbReference type="Ensembl" id="ENSRNOT00000087528.2">
    <property type="protein sequence ID" value="ENSRNOP00000072412.1"/>
    <property type="gene ID" value="ENSRNOG00000019734.7"/>
</dbReference>
<dbReference type="GeneID" id="301250"/>
<dbReference type="KEGG" id="rno:301250"/>
<dbReference type="UCSC" id="RGD:1306240">
    <property type="organism name" value="rat"/>
</dbReference>
<dbReference type="AGR" id="RGD:1306240"/>
<dbReference type="CTD" id="64928"/>
<dbReference type="RGD" id="1306240">
    <property type="gene designation" value="Mrpl14"/>
</dbReference>
<dbReference type="eggNOG" id="KOG3441">
    <property type="taxonomic scope" value="Eukaryota"/>
</dbReference>
<dbReference type="GeneTree" id="ENSGT00390000001121"/>
<dbReference type="InParanoid" id="Q7M0E7"/>
<dbReference type="PhylomeDB" id="Q7M0E7"/>
<dbReference type="TreeFam" id="TF324586"/>
<dbReference type="Reactome" id="R-RNO-5389840">
    <property type="pathway name" value="Mitochondrial translation elongation"/>
</dbReference>
<dbReference type="Reactome" id="R-RNO-5419276">
    <property type="pathway name" value="Mitochondrial translation termination"/>
</dbReference>
<dbReference type="PRO" id="PR:Q7M0E7"/>
<dbReference type="Proteomes" id="UP000002494">
    <property type="component" value="Chromosome 9"/>
</dbReference>
<dbReference type="Bgee" id="ENSRNOG00000019734">
    <property type="expression patterns" value="Expressed in pancreas and 20 other cell types or tissues"/>
</dbReference>
<dbReference type="GO" id="GO:0005762">
    <property type="term" value="C:mitochondrial large ribosomal subunit"/>
    <property type="evidence" value="ECO:0000250"/>
    <property type="project" value="UniProtKB"/>
</dbReference>
<dbReference type="GO" id="GO:0005739">
    <property type="term" value="C:mitochondrion"/>
    <property type="evidence" value="ECO:0000318"/>
    <property type="project" value="GO_Central"/>
</dbReference>
<dbReference type="GO" id="GO:0003735">
    <property type="term" value="F:structural constituent of ribosome"/>
    <property type="evidence" value="ECO:0007669"/>
    <property type="project" value="InterPro"/>
</dbReference>
<dbReference type="GO" id="GO:0006412">
    <property type="term" value="P:translation"/>
    <property type="evidence" value="ECO:0007669"/>
    <property type="project" value="InterPro"/>
</dbReference>
<dbReference type="CDD" id="cd00337">
    <property type="entry name" value="Ribosomal_uL14"/>
    <property type="match status" value="1"/>
</dbReference>
<dbReference type="FunFam" id="2.40.150.20:FF:000004">
    <property type="entry name" value="39S ribosomal protein L14, mitochondrial"/>
    <property type="match status" value="1"/>
</dbReference>
<dbReference type="Gene3D" id="2.40.150.20">
    <property type="entry name" value="Ribosomal protein L14"/>
    <property type="match status" value="1"/>
</dbReference>
<dbReference type="HAMAP" id="MF_01367">
    <property type="entry name" value="Ribosomal_uL14"/>
    <property type="match status" value="1"/>
</dbReference>
<dbReference type="InterPro" id="IPR000218">
    <property type="entry name" value="Ribosomal_uL14"/>
</dbReference>
<dbReference type="InterPro" id="IPR036853">
    <property type="entry name" value="Ribosomal_uL14_sf"/>
</dbReference>
<dbReference type="PANTHER" id="PTHR21037">
    <property type="entry name" value="39S RIBOSOMAL PROTEIN L14, MITOCHONDRIAL"/>
    <property type="match status" value="1"/>
</dbReference>
<dbReference type="PANTHER" id="PTHR21037:SF3">
    <property type="entry name" value="LARGE RIBOSOMAL SUBUNIT PROTEIN UL14M"/>
    <property type="match status" value="1"/>
</dbReference>
<dbReference type="Pfam" id="PF00238">
    <property type="entry name" value="Ribosomal_L14"/>
    <property type="match status" value="1"/>
</dbReference>
<dbReference type="SMART" id="SM01374">
    <property type="entry name" value="Ribosomal_L14"/>
    <property type="match status" value="1"/>
</dbReference>
<dbReference type="SUPFAM" id="SSF50193">
    <property type="entry name" value="Ribosomal protein L14"/>
    <property type="match status" value="1"/>
</dbReference>
<name>RM14_RAT</name>
<evidence type="ECO:0000250" key="1">
    <source>
        <dbReference type="UniProtKB" id="Q6P1L8"/>
    </source>
</evidence>
<evidence type="ECO:0000269" key="2">
    <source>
    </source>
</evidence>
<evidence type="ECO:0000305" key="3"/>
<organism>
    <name type="scientific">Rattus norvegicus</name>
    <name type="common">Rat</name>
    <dbReference type="NCBI Taxonomy" id="10116"/>
    <lineage>
        <taxon>Eukaryota</taxon>
        <taxon>Metazoa</taxon>
        <taxon>Chordata</taxon>
        <taxon>Craniata</taxon>
        <taxon>Vertebrata</taxon>
        <taxon>Euteleostomi</taxon>
        <taxon>Mammalia</taxon>
        <taxon>Eutheria</taxon>
        <taxon>Euarchontoglires</taxon>
        <taxon>Glires</taxon>
        <taxon>Rodentia</taxon>
        <taxon>Myomorpha</taxon>
        <taxon>Muroidea</taxon>
        <taxon>Muridae</taxon>
        <taxon>Murinae</taxon>
        <taxon>Rattus</taxon>
    </lineage>
</organism>
<feature type="transit peptide" description="Mitochondrion" evidence="2">
    <location>
        <begin position="1"/>
        <end position="30"/>
    </location>
</feature>
<feature type="chain" id="PRO_0000261136" description="Large ribosomal subunit protein uL14m">
    <location>
        <begin position="31"/>
        <end position="145"/>
    </location>
</feature>
<feature type="sequence conflict" description="In Ref. 2; AA sequence." evidence="3" ref="2">
    <original>C</original>
    <variation>E</variation>
    <location>
        <position position="57"/>
    </location>
</feature>
<sequence length="145" mass="15913">MAVLTGLFGFFAYVRGAVSQRCFSTSGSLSAIQKMTRVRVVDNSALGNTPYHRPPRCIHVYNKSGVGKVGDQILLAIRGQKKKALIVGHRMPGSRMTPKFDSNNVVLIEDNGNPVGTRIKIPIPTSLRRREGEYSKVLAIAQNFV</sequence>
<gene>
    <name type="primary">Mrpl14</name>
    <name type="synonym">Rpml32</name>
</gene>
<reference key="1">
    <citation type="journal article" date="2004" name="Nature">
        <title>Genome sequence of the Brown Norway rat yields insights into mammalian evolution.</title>
        <authorList>
            <person name="Gibbs R.A."/>
            <person name="Weinstock G.M."/>
            <person name="Metzker M.L."/>
            <person name="Muzny D.M."/>
            <person name="Sodergren E.J."/>
            <person name="Scherer S."/>
            <person name="Scott G."/>
            <person name="Steffen D."/>
            <person name="Worley K.C."/>
            <person name="Burch P.E."/>
            <person name="Okwuonu G."/>
            <person name="Hines S."/>
            <person name="Lewis L."/>
            <person name="Deramo C."/>
            <person name="Delgado O."/>
            <person name="Dugan-Rocha S."/>
            <person name="Miner G."/>
            <person name="Morgan M."/>
            <person name="Hawes A."/>
            <person name="Gill R."/>
            <person name="Holt R.A."/>
            <person name="Adams M.D."/>
            <person name="Amanatides P.G."/>
            <person name="Baden-Tillson H."/>
            <person name="Barnstead M."/>
            <person name="Chin S."/>
            <person name="Evans C.A."/>
            <person name="Ferriera S."/>
            <person name="Fosler C."/>
            <person name="Glodek A."/>
            <person name="Gu Z."/>
            <person name="Jennings D."/>
            <person name="Kraft C.L."/>
            <person name="Nguyen T."/>
            <person name="Pfannkoch C.M."/>
            <person name="Sitter C."/>
            <person name="Sutton G.G."/>
            <person name="Venter J.C."/>
            <person name="Woodage T."/>
            <person name="Smith D."/>
            <person name="Lee H.-M."/>
            <person name="Gustafson E."/>
            <person name="Cahill P."/>
            <person name="Kana A."/>
            <person name="Doucette-Stamm L."/>
            <person name="Weinstock K."/>
            <person name="Fechtel K."/>
            <person name="Weiss R.B."/>
            <person name="Dunn D.M."/>
            <person name="Green E.D."/>
            <person name="Blakesley R.W."/>
            <person name="Bouffard G.G."/>
            <person name="De Jong P.J."/>
            <person name="Osoegawa K."/>
            <person name="Zhu B."/>
            <person name="Marra M."/>
            <person name="Schein J."/>
            <person name="Bosdet I."/>
            <person name="Fjell C."/>
            <person name="Jones S."/>
            <person name="Krzywinski M."/>
            <person name="Mathewson C."/>
            <person name="Siddiqui A."/>
            <person name="Wye N."/>
            <person name="McPherson J."/>
            <person name="Zhao S."/>
            <person name="Fraser C.M."/>
            <person name="Shetty J."/>
            <person name="Shatsman S."/>
            <person name="Geer K."/>
            <person name="Chen Y."/>
            <person name="Abramzon S."/>
            <person name="Nierman W.C."/>
            <person name="Havlak P.H."/>
            <person name="Chen R."/>
            <person name="Durbin K.J."/>
            <person name="Egan A."/>
            <person name="Ren Y."/>
            <person name="Song X.-Z."/>
            <person name="Li B."/>
            <person name="Liu Y."/>
            <person name="Qin X."/>
            <person name="Cawley S."/>
            <person name="Cooney A.J."/>
            <person name="D'Souza L.M."/>
            <person name="Martin K."/>
            <person name="Wu J.Q."/>
            <person name="Gonzalez-Garay M.L."/>
            <person name="Jackson A.R."/>
            <person name="Kalafus K.J."/>
            <person name="McLeod M.P."/>
            <person name="Milosavljevic A."/>
            <person name="Virk D."/>
            <person name="Volkov A."/>
            <person name="Wheeler D.A."/>
            <person name="Zhang Z."/>
            <person name="Bailey J.A."/>
            <person name="Eichler E.E."/>
            <person name="Tuzun E."/>
            <person name="Birney E."/>
            <person name="Mongin E."/>
            <person name="Ureta-Vidal A."/>
            <person name="Woodwark C."/>
            <person name="Zdobnov E."/>
            <person name="Bork P."/>
            <person name="Suyama M."/>
            <person name="Torrents D."/>
            <person name="Alexandersson M."/>
            <person name="Trask B.J."/>
            <person name="Young J.M."/>
            <person name="Huang H."/>
            <person name="Wang H."/>
            <person name="Xing H."/>
            <person name="Daniels S."/>
            <person name="Gietzen D."/>
            <person name="Schmidt J."/>
            <person name="Stevens K."/>
            <person name="Vitt U."/>
            <person name="Wingrove J."/>
            <person name="Camara F."/>
            <person name="Mar Alba M."/>
            <person name="Abril J.F."/>
            <person name="Guigo R."/>
            <person name="Smit A."/>
            <person name="Dubchak I."/>
            <person name="Rubin E.M."/>
            <person name="Couronne O."/>
            <person name="Poliakov A."/>
            <person name="Huebner N."/>
            <person name="Ganten D."/>
            <person name="Goesele C."/>
            <person name="Hummel O."/>
            <person name="Kreitler T."/>
            <person name="Lee Y.-A."/>
            <person name="Monti J."/>
            <person name="Schulz H."/>
            <person name="Zimdahl H."/>
            <person name="Himmelbauer H."/>
            <person name="Lehrach H."/>
            <person name="Jacob H.J."/>
            <person name="Bromberg S."/>
            <person name="Gullings-Handley J."/>
            <person name="Jensen-Seaman M.I."/>
            <person name="Kwitek A.E."/>
            <person name="Lazar J."/>
            <person name="Pasko D."/>
            <person name="Tonellato P.J."/>
            <person name="Twigger S."/>
            <person name="Ponting C.P."/>
            <person name="Duarte J.M."/>
            <person name="Rice S."/>
            <person name="Goodstadt L."/>
            <person name="Beatson S.A."/>
            <person name="Emes R.D."/>
            <person name="Winter E.E."/>
            <person name="Webber C."/>
            <person name="Brandt P."/>
            <person name="Nyakatura G."/>
            <person name="Adetobi M."/>
            <person name="Chiaromonte F."/>
            <person name="Elnitski L."/>
            <person name="Eswara P."/>
            <person name="Hardison R.C."/>
            <person name="Hou M."/>
            <person name="Kolbe D."/>
            <person name="Makova K."/>
            <person name="Miller W."/>
            <person name="Nekrutenko A."/>
            <person name="Riemer C."/>
            <person name="Schwartz S."/>
            <person name="Taylor J."/>
            <person name="Yang S."/>
            <person name="Zhang Y."/>
            <person name="Lindpaintner K."/>
            <person name="Andrews T.D."/>
            <person name="Caccamo M."/>
            <person name="Clamp M."/>
            <person name="Clarke L."/>
            <person name="Curwen V."/>
            <person name="Durbin R.M."/>
            <person name="Eyras E."/>
            <person name="Searle S.M."/>
            <person name="Cooper G.M."/>
            <person name="Batzoglou S."/>
            <person name="Brudno M."/>
            <person name="Sidow A."/>
            <person name="Stone E.A."/>
            <person name="Payseur B.A."/>
            <person name="Bourque G."/>
            <person name="Lopez-Otin C."/>
            <person name="Puente X.S."/>
            <person name="Chakrabarti K."/>
            <person name="Chatterji S."/>
            <person name="Dewey C."/>
            <person name="Pachter L."/>
            <person name="Bray N."/>
            <person name="Yap V.B."/>
            <person name="Caspi A."/>
            <person name="Tesler G."/>
            <person name="Pevzner P.A."/>
            <person name="Haussler D."/>
            <person name="Roskin K.M."/>
            <person name="Baertsch R."/>
            <person name="Clawson H."/>
            <person name="Furey T.S."/>
            <person name="Hinrichs A.S."/>
            <person name="Karolchik D."/>
            <person name="Kent W.J."/>
            <person name="Rosenbloom K.R."/>
            <person name="Trumbower H."/>
            <person name="Weirauch M."/>
            <person name="Cooper D.N."/>
            <person name="Stenson P.D."/>
            <person name="Ma B."/>
            <person name="Brent M."/>
            <person name="Arumugam M."/>
            <person name="Shteynberg D."/>
            <person name="Copley R.R."/>
            <person name="Taylor M.S."/>
            <person name="Riethman H."/>
            <person name="Mudunuri U."/>
            <person name="Peterson J."/>
            <person name="Guyer M."/>
            <person name="Felsenfeld A."/>
            <person name="Old S."/>
            <person name="Mockrin S."/>
            <person name="Collins F.S."/>
        </authorList>
    </citation>
    <scope>NUCLEOTIDE SEQUENCE [LARGE SCALE GENOMIC DNA]</scope>
    <source>
        <strain>Brown Norway</strain>
    </source>
</reference>
<reference key="2">
    <citation type="journal article" date="1998" name="J. Biol. Chem.">
        <title>Mammalian mitochondrial ribosomal proteins. N-terminal amino acid sequencing, characterization, and identification of corresponding gene sequences.</title>
        <authorList>
            <person name="Goldschmidt-Reisin S."/>
            <person name="Kitakawa M."/>
            <person name="Herfurth E."/>
            <person name="Wittmann-Liebold B."/>
            <person name="Grohmann L."/>
            <person name="Graack H.-R."/>
        </authorList>
    </citation>
    <scope>PROTEIN SEQUENCE OF 31-88</scope>
    <scope>SUBCELLULAR LOCATION</scope>
</reference>
<accession>Q7M0E7</accession>